<evidence type="ECO:0000250" key="1">
    <source>
        <dbReference type="UniProtKB" id="Q8N0U8"/>
    </source>
</evidence>
<evidence type="ECO:0000269" key="2">
    <source>
    </source>
</evidence>
<evidence type="ECO:0000305" key="3"/>
<evidence type="ECO:0000312" key="4">
    <source>
        <dbReference type="EMBL" id="AAR82913.1"/>
    </source>
</evidence>
<evidence type="ECO:0007744" key="5">
    <source>
        <dbReference type="PDB" id="6WV8"/>
    </source>
</evidence>
<evidence type="ECO:0007744" key="6">
    <source>
        <dbReference type="PDB" id="6WV9"/>
    </source>
</evidence>
<evidence type="ECO:0007744" key="7">
    <source>
        <dbReference type="PDB" id="6WVA"/>
    </source>
</evidence>
<evidence type="ECO:0007744" key="8">
    <source>
        <dbReference type="PDB" id="6WVB"/>
    </source>
</evidence>
<evidence type="ECO:0007744" key="9">
    <source>
        <dbReference type="PDB" id="6WVI"/>
    </source>
</evidence>
<evidence type="ECO:0007829" key="10">
    <source>
        <dbReference type="PDB" id="6WVB"/>
    </source>
</evidence>
<evidence type="ECO:0007829" key="11">
    <source>
        <dbReference type="PDB" id="6WVI"/>
    </source>
</evidence>
<dbReference type="EC" id="1.17.4.4" evidence="2"/>
<dbReference type="EMBL" id="AY423043">
    <property type="protein sequence ID" value="AAR82913.1"/>
    <property type="molecule type" value="mRNA"/>
</dbReference>
<dbReference type="RefSeq" id="NP_001027940.1">
    <property type="nucleotide sequence ID" value="NM_001032768.1"/>
</dbReference>
<dbReference type="PDB" id="6WV8">
    <property type="method" value="X-ray"/>
    <property type="resolution" value="3.01 A"/>
    <property type="chains" value="A=7-175"/>
</dbReference>
<dbReference type="PDB" id="6WV9">
    <property type="method" value="X-ray"/>
    <property type="resolution" value="3.35 A"/>
    <property type="chains" value="A=7-175"/>
</dbReference>
<dbReference type="PDB" id="6WVA">
    <property type="method" value="X-ray"/>
    <property type="resolution" value="3.35 A"/>
    <property type="chains" value="A=7-175"/>
</dbReference>
<dbReference type="PDB" id="6WVB">
    <property type="method" value="X-ray"/>
    <property type="resolution" value="2.87 A"/>
    <property type="chains" value="A=7-175"/>
</dbReference>
<dbReference type="PDB" id="6WVI">
    <property type="method" value="X-ray"/>
    <property type="resolution" value="2.40 A"/>
    <property type="chains" value="A=7-175"/>
</dbReference>
<dbReference type="PDBsum" id="6WV8"/>
<dbReference type="PDBsum" id="6WV9"/>
<dbReference type="PDBsum" id="6WVA"/>
<dbReference type="PDBsum" id="6WVB"/>
<dbReference type="PDBsum" id="6WVI"/>
<dbReference type="SMR" id="Q6TEK8"/>
<dbReference type="GeneID" id="446035"/>
<dbReference type="KEGG" id="tru:446035"/>
<dbReference type="CTD" id="154807"/>
<dbReference type="eggNOG" id="ENOG502S4E7">
    <property type="taxonomic scope" value="Eukaryota"/>
</dbReference>
<dbReference type="HOGENOM" id="CLU_105471_0_0_1"/>
<dbReference type="OrthoDB" id="17010at2759"/>
<dbReference type="TreeFam" id="TF328467"/>
<dbReference type="Proteomes" id="UP000005226">
    <property type="component" value="Chromosome 15"/>
</dbReference>
<dbReference type="GO" id="GO:0005789">
    <property type="term" value="C:endoplasmic reticulum membrane"/>
    <property type="evidence" value="ECO:0007669"/>
    <property type="project" value="UniProtKB-SubCell"/>
</dbReference>
<dbReference type="GO" id="GO:0048038">
    <property type="term" value="F:quinone binding"/>
    <property type="evidence" value="ECO:0007669"/>
    <property type="project" value="UniProtKB-KW"/>
</dbReference>
<dbReference type="GO" id="GO:0047057">
    <property type="term" value="F:vitamin-K-epoxide reductase (warfarin-sensitive) activity"/>
    <property type="evidence" value="ECO:0000314"/>
    <property type="project" value="UniProtKB"/>
</dbReference>
<dbReference type="GO" id="GO:0042373">
    <property type="term" value="P:vitamin K metabolic process"/>
    <property type="evidence" value="ECO:0000314"/>
    <property type="project" value="UniProtKB"/>
</dbReference>
<dbReference type="CDD" id="cd12917">
    <property type="entry name" value="VKOR_euk"/>
    <property type="match status" value="1"/>
</dbReference>
<dbReference type="FunFam" id="1.20.1440.130:FF:000001">
    <property type="entry name" value="Vitamin K epoxide reductase complex subunit 1-like 1"/>
    <property type="match status" value="1"/>
</dbReference>
<dbReference type="Gene3D" id="1.20.1440.130">
    <property type="entry name" value="VKOR domain"/>
    <property type="match status" value="1"/>
</dbReference>
<dbReference type="InterPro" id="IPR012932">
    <property type="entry name" value="VKOR"/>
</dbReference>
<dbReference type="InterPro" id="IPR038354">
    <property type="entry name" value="VKOR_sf"/>
</dbReference>
<dbReference type="InterPro" id="IPR042406">
    <property type="entry name" value="VKORC1/VKORC1L1"/>
</dbReference>
<dbReference type="PANTHER" id="PTHR14519:SF5">
    <property type="entry name" value="VITAMIN K EPOXIDE REDUCTASE COMPLEX SUBUNIT 1-LIKE PROTEIN 1"/>
    <property type="match status" value="1"/>
</dbReference>
<dbReference type="PANTHER" id="PTHR14519">
    <property type="entry name" value="VITAMIN K EPOXIDE REDUCTASE COMPLEX, SUBUNIT 1"/>
    <property type="match status" value="1"/>
</dbReference>
<dbReference type="Pfam" id="PF07884">
    <property type="entry name" value="VKOR"/>
    <property type="match status" value="1"/>
</dbReference>
<dbReference type="SMART" id="SM00756">
    <property type="entry name" value="VKc"/>
    <property type="match status" value="1"/>
</dbReference>
<organism>
    <name type="scientific">Takifugu rubripes</name>
    <name type="common">Japanese pufferfish</name>
    <name type="synonym">Fugu rubripes</name>
    <dbReference type="NCBI Taxonomy" id="31033"/>
    <lineage>
        <taxon>Eukaryota</taxon>
        <taxon>Metazoa</taxon>
        <taxon>Chordata</taxon>
        <taxon>Craniata</taxon>
        <taxon>Vertebrata</taxon>
        <taxon>Euteleostomi</taxon>
        <taxon>Actinopterygii</taxon>
        <taxon>Neopterygii</taxon>
        <taxon>Teleostei</taxon>
        <taxon>Neoteleostei</taxon>
        <taxon>Acanthomorphata</taxon>
        <taxon>Eupercaria</taxon>
        <taxon>Tetraodontiformes</taxon>
        <taxon>Tetradontoidea</taxon>
        <taxon>Tetraodontidae</taxon>
        <taxon>Takifugu</taxon>
    </lineage>
</organism>
<comment type="function">
    <text evidence="1 2">Involved in vitamin K metabolism (PubMed:33154105). Can reduce inactive vitamin K 2,3-epoxide to active vitamin K, and may contribute to vitamin K-mediated protection against oxidative stress (PubMed:33154105). Plays a role in vitamin K-dependent gamma-carboxylation of Glu residues in target proteins (By similarity).</text>
</comment>
<comment type="catalytic activity">
    <reaction evidence="2">
        <text>phylloquinone + [protein]-disulfide + H2O = 2,3-epoxyphylloquinone + [protein]-dithiol</text>
        <dbReference type="Rhea" id="RHEA:13817"/>
        <dbReference type="Rhea" id="RHEA-COMP:10593"/>
        <dbReference type="Rhea" id="RHEA-COMP:10594"/>
        <dbReference type="ChEBI" id="CHEBI:15377"/>
        <dbReference type="ChEBI" id="CHEBI:15759"/>
        <dbReference type="ChEBI" id="CHEBI:18067"/>
        <dbReference type="ChEBI" id="CHEBI:29950"/>
        <dbReference type="ChEBI" id="CHEBI:50058"/>
        <dbReference type="EC" id="1.17.4.4"/>
    </reaction>
    <physiologicalReaction direction="right-to-left" evidence="2">
        <dbReference type="Rhea" id="RHEA:13819"/>
    </physiologicalReaction>
</comment>
<comment type="catalytic activity">
    <reaction evidence="2">
        <text>phylloquinol + [protein]-disulfide = phylloquinone + [protein]-dithiol</text>
        <dbReference type="Rhea" id="RHEA:57744"/>
        <dbReference type="Rhea" id="RHEA-COMP:10593"/>
        <dbReference type="Rhea" id="RHEA-COMP:10594"/>
        <dbReference type="ChEBI" id="CHEBI:18067"/>
        <dbReference type="ChEBI" id="CHEBI:28433"/>
        <dbReference type="ChEBI" id="CHEBI:29950"/>
        <dbReference type="ChEBI" id="CHEBI:50058"/>
        <dbReference type="EC" id="1.17.4.4"/>
    </reaction>
    <physiologicalReaction direction="right-to-left" evidence="2">
        <dbReference type="Rhea" id="RHEA:57746"/>
    </physiologicalReaction>
</comment>
<comment type="activity regulation">
    <text evidence="2">Inhibited by warfarin (coumadin) (PubMed:33154105). Warfarin locks VKORC1 in both redox states into the closed conformation (PubMed:33154105).</text>
</comment>
<comment type="subcellular location">
    <subcellularLocation>
        <location evidence="2">Endoplasmic reticulum membrane</location>
        <topology evidence="2">Multi-pass membrane protein</topology>
    </subcellularLocation>
</comment>
<comment type="domain">
    <text evidence="2">Partially oxidized VKORC1 forms a cysteine adduct with substrates, vitamin K 2,3-epoxide, inducing a closed conformation, juxtaposing all cysteines (S-S or SH) for unimpeded electron transfer (PubMed:33154105). VKOR becomes fully oxidized with an open conformation that releases reaction products, vitamin K quinone, or hydroquinone (PubMed:33154105). Cys-138 and Cys-141 constitute the catalytic redox-active center (PubMed:33154105). Cys-49 and Cys-57 are the cysteine pair that mediates transfer of reducing equivalents during catalysis (PubMed:33154105).</text>
</comment>
<comment type="similarity">
    <text evidence="3">Belongs to the VKOR family.</text>
</comment>
<protein>
    <recommendedName>
        <fullName>Vitamin K epoxide reductase complex subunit 1-like protein 1</fullName>
        <shortName>VKORC1-like protein 1</shortName>
        <ecNumber evidence="2">1.17.4.4</ecNumber>
    </recommendedName>
</protein>
<name>VKORL_TAKRU</name>
<reference key="1">
    <citation type="journal article" date="2004" name="Nature">
        <title>Mutations in VKORC1 cause warfarin resistance and multiple coagulation factor deficiency type 2.</title>
        <authorList>
            <person name="Rost S."/>
            <person name="Fregin A."/>
            <person name="Ivaskevicius V."/>
            <person name="Conzelmann E."/>
            <person name="Hoertnagel K."/>
            <person name="Pelz H.-J."/>
            <person name="Lappegard K."/>
            <person name="Seifried E."/>
            <person name="Scharrer I."/>
            <person name="Tuddenham E.G.D."/>
            <person name="Mueller C.R."/>
            <person name="Strom T.M."/>
            <person name="Oldenburg J."/>
        </authorList>
    </citation>
    <scope>NUCLEOTIDE SEQUENCE [MRNA]</scope>
    <source>
        <tissue evidence="4">Brain</tissue>
    </source>
</reference>
<reference key="2">
    <citation type="journal article" date="2011" name="Genome Biol. Evol.">
        <title>Integration of the genetic map and genome assembly of fugu facilitates insights into distinct features of genome evolution in teleosts and mammals.</title>
        <authorList>
            <person name="Kai W."/>
            <person name="Kikuchi K."/>
            <person name="Tohari S."/>
            <person name="Chew A.K."/>
            <person name="Tay A."/>
            <person name="Fujiwara A."/>
            <person name="Hosoya S."/>
            <person name="Suetake H."/>
            <person name="Naruse K."/>
            <person name="Brenner S."/>
            <person name="Suzuki Y."/>
            <person name="Venkatesh B."/>
        </authorList>
    </citation>
    <scope>NUCLEOTIDE SEQUENCE [LARGE SCALE GENOMIC DNA]</scope>
</reference>
<reference evidence="5 6" key="3">
    <citation type="journal article" date="2021" name="Science">
        <title>Structural basis of antagonizing the vitamin K catalytic cycle for anticoagulation.</title>
        <authorList>
            <person name="Liu S."/>
            <person name="Li S."/>
            <person name="Shen G."/>
            <person name="Sukumar N."/>
            <person name="Krezel A.M."/>
            <person name="Li W."/>
        </authorList>
    </citation>
    <scope>X-RAY CRYSTALLOGRAPHY (2.40 ANGSTROMS) OF 7-175 IN COMPLEX WITH WARFARIN AND VITAMIN K</scope>
    <scope>FUNCTION</scope>
    <scope>CATALYTIC ACTIVITY</scope>
    <scope>ACTIVITY REGULATION</scope>
    <scope>SUBCELLULAR LOCATION</scope>
    <scope>TOPOLOGY</scope>
</reference>
<keyword id="KW-0002">3D-structure</keyword>
<keyword id="KW-1015">Disulfide bond</keyword>
<keyword id="KW-0256">Endoplasmic reticulum</keyword>
<keyword id="KW-0472">Membrane</keyword>
<keyword id="KW-0560">Oxidoreductase</keyword>
<keyword id="KW-0874">Quinone</keyword>
<keyword id="KW-0676">Redox-active center</keyword>
<keyword id="KW-1185">Reference proteome</keyword>
<keyword id="KW-0812">Transmembrane</keyword>
<keyword id="KW-1133">Transmembrane helix</keyword>
<proteinExistence type="evidence at protein level"/>
<feature type="chain" id="PRO_0000457039" description="Vitamin K epoxide reductase complex subunit 1-like protein 1">
    <location>
        <begin position="1"/>
        <end position="175"/>
    </location>
</feature>
<feature type="topological domain" description="Cytoplasmic" evidence="2 5 6 7 8 9">
    <location>
        <begin position="1"/>
        <end position="12"/>
    </location>
</feature>
<feature type="transmembrane region" description="Helical" evidence="2 5 6 7 8 9">
    <location>
        <begin position="13"/>
        <end position="35"/>
    </location>
</feature>
<feature type="topological domain" description="Lumenal" evidence="2 5 6 7 8 9">
    <location>
        <begin position="36"/>
        <end position="86"/>
    </location>
</feature>
<feature type="transmembrane region" description="Helical" evidence="2 5 6 7 8 9">
    <location>
        <begin position="87"/>
        <end position="101"/>
    </location>
</feature>
<feature type="topological domain" description="Cytoplasmic" evidence="2 5 6 7 8 9">
    <location>
        <begin position="102"/>
        <end position="106"/>
    </location>
</feature>
<feature type="transmembrane region" description="Helical" evidence="2 5 6 7 8 9">
    <location>
        <begin position="107"/>
        <end position="134"/>
    </location>
</feature>
<feature type="topological domain" description="Lumenal" evidence="2 5 6 7 8 9">
    <location>
        <begin position="135"/>
        <end position="137"/>
    </location>
</feature>
<feature type="transmembrane region" description="Helical" evidence="2 5 6 7 8 9">
    <location>
        <begin position="138"/>
        <end position="159"/>
    </location>
</feature>
<feature type="topological domain" description="Cytoplasmic" evidence="2 5 6 7 8 9">
    <location>
        <begin position="160"/>
        <end position="175"/>
    </location>
</feature>
<feature type="binding site" evidence="2 8">
    <location>
        <position position="86"/>
    </location>
    <ligand>
        <name>(S)-warfarin</name>
        <dbReference type="ChEBI" id="CHEBI:87744"/>
    </ligand>
</feature>
<feature type="binding site" evidence="2 6 7">
    <location>
        <position position="141"/>
    </location>
    <ligand>
        <name>phylloquinone</name>
        <dbReference type="ChEBI" id="CHEBI:18067"/>
    </ligand>
</feature>
<feature type="binding site" evidence="2 8">
    <location>
        <position position="145"/>
    </location>
    <ligand>
        <name>(S)-warfarin</name>
        <dbReference type="ChEBI" id="CHEBI:87744"/>
    </ligand>
</feature>
<feature type="binding site" evidence="2 6 7">
    <location>
        <position position="145"/>
    </location>
    <ligand>
        <name>phylloquinone</name>
        <dbReference type="ChEBI" id="CHEBI:18067"/>
    </ligand>
</feature>
<feature type="disulfide bond" description="Redox-active" evidence="2 5 6 7 8 9">
    <location>
        <begin position="49"/>
        <end position="57"/>
    </location>
</feature>
<feature type="disulfide bond" description="Redox-active" evidence="2 6 7">
    <location>
        <begin position="138"/>
        <end position="141"/>
    </location>
</feature>
<feature type="helix" evidence="11">
    <location>
        <begin position="12"/>
        <end position="38"/>
    </location>
</feature>
<feature type="turn" evidence="11">
    <location>
        <begin position="39"/>
        <end position="41"/>
    </location>
</feature>
<feature type="helix" evidence="11">
    <location>
        <begin position="43"/>
        <end position="49"/>
    </location>
</feature>
<feature type="helix" evidence="10">
    <location>
        <begin position="58"/>
        <end position="61"/>
    </location>
</feature>
<feature type="helix" evidence="11">
    <location>
        <begin position="64"/>
        <end position="66"/>
    </location>
</feature>
<feature type="helix" evidence="11">
    <location>
        <begin position="68"/>
        <end position="70"/>
    </location>
</feature>
<feature type="strand" evidence="11">
    <location>
        <begin position="71"/>
        <end position="76"/>
    </location>
</feature>
<feature type="strand" evidence="11">
    <location>
        <begin position="78"/>
        <end position="80"/>
    </location>
</feature>
<feature type="helix" evidence="11">
    <location>
        <begin position="86"/>
        <end position="101"/>
    </location>
</feature>
<feature type="helix" evidence="11">
    <location>
        <begin position="106"/>
        <end position="131"/>
    </location>
</feature>
<feature type="turn" evidence="11">
    <location>
        <begin position="132"/>
        <end position="134"/>
    </location>
</feature>
<feature type="helix" evidence="11">
    <location>
        <begin position="139"/>
        <end position="164"/>
    </location>
</feature>
<feature type="helix" evidence="11">
    <location>
        <begin position="167"/>
        <end position="169"/>
    </location>
</feature>
<sequence length="175" mass="19582">MAAPVLRVSTPRWERIARVLVCLLGILLSLYAFHVEREHARDPSYKALCDVSSSISCSKVFGSRWGRGFGLLGSIFGNDSALNQPNSVYGIVFYAFQLLLGMTVSAMAALILMTTSIMSVVGSLYLGYILYFVLKDLCVICVTTYALNFILFVLNYKRLVYLNEAWKQKLQAKQD</sequence>
<gene>
    <name type="primary">vkorc1l1</name>
</gene>
<accession>Q6TEK8</accession>
<accession>H2SXD6</accession>